<comment type="function">
    <text evidence="1">This protein is one of the two subunits of integration host factor, a specific DNA-binding protein that functions in genetic recombination as well as in transcriptional and translational control.</text>
</comment>
<comment type="subunit">
    <text evidence="1">Heterodimer of an alpha and a beta chain.</text>
</comment>
<comment type="similarity">
    <text evidence="1">Belongs to the bacterial histone-like protein family.</text>
</comment>
<proteinExistence type="inferred from homology"/>
<dbReference type="EMBL" id="CP001298">
    <property type="protein sequence ID" value="ACK83175.1"/>
    <property type="molecule type" value="Genomic_DNA"/>
</dbReference>
<dbReference type="RefSeq" id="WP_003598011.1">
    <property type="nucleotide sequence ID" value="NC_011757.1"/>
</dbReference>
<dbReference type="SMR" id="B7KYG6"/>
<dbReference type="KEGG" id="mch:Mchl_2330"/>
<dbReference type="HOGENOM" id="CLU_105066_1_1_5"/>
<dbReference type="Proteomes" id="UP000002385">
    <property type="component" value="Chromosome"/>
</dbReference>
<dbReference type="GO" id="GO:0005829">
    <property type="term" value="C:cytosol"/>
    <property type="evidence" value="ECO:0007669"/>
    <property type="project" value="TreeGrafter"/>
</dbReference>
<dbReference type="GO" id="GO:0003677">
    <property type="term" value="F:DNA binding"/>
    <property type="evidence" value="ECO:0007669"/>
    <property type="project" value="UniProtKB-UniRule"/>
</dbReference>
<dbReference type="GO" id="GO:0030527">
    <property type="term" value="F:structural constituent of chromatin"/>
    <property type="evidence" value="ECO:0007669"/>
    <property type="project" value="InterPro"/>
</dbReference>
<dbReference type="GO" id="GO:0006310">
    <property type="term" value="P:DNA recombination"/>
    <property type="evidence" value="ECO:0007669"/>
    <property type="project" value="UniProtKB-UniRule"/>
</dbReference>
<dbReference type="GO" id="GO:0009893">
    <property type="term" value="P:positive regulation of metabolic process"/>
    <property type="evidence" value="ECO:0007669"/>
    <property type="project" value="UniProtKB-ARBA"/>
</dbReference>
<dbReference type="GO" id="GO:0006355">
    <property type="term" value="P:regulation of DNA-templated transcription"/>
    <property type="evidence" value="ECO:0007669"/>
    <property type="project" value="UniProtKB-UniRule"/>
</dbReference>
<dbReference type="GO" id="GO:0006417">
    <property type="term" value="P:regulation of translation"/>
    <property type="evidence" value="ECO:0007669"/>
    <property type="project" value="UniProtKB-UniRule"/>
</dbReference>
<dbReference type="CDD" id="cd13835">
    <property type="entry name" value="IHF_A"/>
    <property type="match status" value="1"/>
</dbReference>
<dbReference type="FunFam" id="4.10.520.10:FF:000010">
    <property type="entry name" value="Integration host factor subunit alpha"/>
    <property type="match status" value="1"/>
</dbReference>
<dbReference type="Gene3D" id="4.10.520.10">
    <property type="entry name" value="IHF-like DNA-binding proteins"/>
    <property type="match status" value="1"/>
</dbReference>
<dbReference type="HAMAP" id="MF_00380">
    <property type="entry name" value="IHF_alpha"/>
    <property type="match status" value="1"/>
</dbReference>
<dbReference type="InterPro" id="IPR000119">
    <property type="entry name" value="Hist_DNA-bd"/>
</dbReference>
<dbReference type="InterPro" id="IPR020816">
    <property type="entry name" value="Histone-like_DNA-bd_CS"/>
</dbReference>
<dbReference type="InterPro" id="IPR010992">
    <property type="entry name" value="IHF-like_DNA-bd_dom_sf"/>
</dbReference>
<dbReference type="InterPro" id="IPR005684">
    <property type="entry name" value="IHF_alpha"/>
</dbReference>
<dbReference type="NCBIfam" id="NF001401">
    <property type="entry name" value="PRK00285.1"/>
    <property type="match status" value="1"/>
</dbReference>
<dbReference type="PANTHER" id="PTHR33175">
    <property type="entry name" value="DNA-BINDING PROTEIN HU"/>
    <property type="match status" value="1"/>
</dbReference>
<dbReference type="PANTHER" id="PTHR33175:SF2">
    <property type="entry name" value="INTEGRATION HOST FACTOR SUBUNIT ALPHA"/>
    <property type="match status" value="1"/>
</dbReference>
<dbReference type="Pfam" id="PF00216">
    <property type="entry name" value="Bac_DNA_binding"/>
    <property type="match status" value="1"/>
</dbReference>
<dbReference type="PRINTS" id="PR01727">
    <property type="entry name" value="DNABINDINGHU"/>
</dbReference>
<dbReference type="SMART" id="SM00411">
    <property type="entry name" value="BHL"/>
    <property type="match status" value="1"/>
</dbReference>
<dbReference type="SUPFAM" id="SSF47729">
    <property type="entry name" value="IHF-like DNA-binding proteins"/>
    <property type="match status" value="1"/>
</dbReference>
<dbReference type="PROSITE" id="PS00045">
    <property type="entry name" value="HISTONE_LIKE"/>
    <property type="match status" value="1"/>
</dbReference>
<organism>
    <name type="scientific">Methylorubrum extorquens (strain CM4 / NCIMB 13688)</name>
    <name type="common">Methylobacterium extorquens</name>
    <dbReference type="NCBI Taxonomy" id="440085"/>
    <lineage>
        <taxon>Bacteria</taxon>
        <taxon>Pseudomonadati</taxon>
        <taxon>Pseudomonadota</taxon>
        <taxon>Alphaproteobacteria</taxon>
        <taxon>Hyphomicrobiales</taxon>
        <taxon>Methylobacteriaceae</taxon>
        <taxon>Methylorubrum</taxon>
    </lineage>
</organism>
<accession>B7KYG6</accession>
<protein>
    <recommendedName>
        <fullName evidence="1">Integration host factor subunit alpha</fullName>
        <shortName evidence="1">IHF-alpha</shortName>
    </recommendedName>
</protein>
<gene>
    <name evidence="1" type="primary">ihfA</name>
    <name evidence="1" type="synonym">himA</name>
    <name type="ordered locus">Mchl_2330</name>
</gene>
<feature type="chain" id="PRO_1000190426" description="Integration host factor subunit alpha">
    <location>
        <begin position="1"/>
        <end position="108"/>
    </location>
</feature>
<name>IHFA_METC4</name>
<reference key="1">
    <citation type="submission" date="2008-12" db="EMBL/GenBank/DDBJ databases">
        <title>Complete sequence of chromosome of Methylobacterium chloromethanicum CM4.</title>
        <authorList>
            <consortium name="US DOE Joint Genome Institute"/>
            <person name="Lucas S."/>
            <person name="Copeland A."/>
            <person name="Lapidus A."/>
            <person name="Glavina del Rio T."/>
            <person name="Dalin E."/>
            <person name="Tice H."/>
            <person name="Bruce D."/>
            <person name="Goodwin L."/>
            <person name="Pitluck S."/>
            <person name="Chertkov O."/>
            <person name="Brettin T."/>
            <person name="Detter J.C."/>
            <person name="Han C."/>
            <person name="Larimer F."/>
            <person name="Land M."/>
            <person name="Hauser L."/>
            <person name="Kyrpides N."/>
            <person name="Mikhailova N."/>
            <person name="Marx C."/>
            <person name="Richardson P."/>
        </authorList>
    </citation>
    <scope>NUCLEOTIDE SEQUENCE [LARGE SCALE GENOMIC DNA]</scope>
    <source>
        <strain>CM4 / NCIMB 13688</strain>
    </source>
</reference>
<keyword id="KW-0233">DNA recombination</keyword>
<keyword id="KW-0238">DNA-binding</keyword>
<keyword id="KW-0804">Transcription</keyword>
<keyword id="KW-0805">Transcription regulation</keyword>
<keyword id="KW-0810">Translation regulation</keyword>
<sequence>MAGKTVTRADLSEAVYQQVGLSRAESAALVETVLAEICTCLSSGETVKLSSFGSFVVRSKGKRIGRNPKTGVEVEIEPRQVMVFKPSNVLKARINGGHVNGLDMDEDE</sequence>
<evidence type="ECO:0000255" key="1">
    <source>
        <dbReference type="HAMAP-Rule" id="MF_00380"/>
    </source>
</evidence>